<feature type="chain" id="PRO_0000135970" description="Replication factor C small subunit">
    <location>
        <begin position="1"/>
        <end position="325"/>
    </location>
</feature>
<feature type="binding site" evidence="1">
    <location>
        <begin position="47"/>
        <end position="54"/>
    </location>
    <ligand>
        <name>ATP</name>
        <dbReference type="ChEBI" id="CHEBI:30616"/>
    </ligand>
</feature>
<protein>
    <recommendedName>
        <fullName evidence="1">Replication factor C small subunit</fullName>
        <shortName evidence="1">RFC small subunit</shortName>
    </recommendedName>
    <alternativeName>
        <fullName evidence="1">Clamp loader small subunit</fullName>
    </alternativeName>
</protein>
<proteinExistence type="inferred from homology"/>
<accession>Q9YBS7</accession>
<comment type="function">
    <text evidence="1">Part of the RFC clamp loader complex which loads the PCNA sliding clamp onto DNA.</text>
</comment>
<comment type="subunit">
    <text evidence="1">Heteromultimer composed of small subunits (RfcS) and large subunits (RfcL).</text>
</comment>
<comment type="similarity">
    <text evidence="1">Belongs to the activator 1 small subunits family. RfcS subfamily.</text>
</comment>
<name>RFCS_AERPE</name>
<sequence>MSSVLEMLWVEKYRPRSLDDIVDQKHVVERLKQFVKQRNMPHLLFAGPPGTGKTTAAHALAHDLFGENYRQYMLELNASDERGINVIREKVKEFARSRTPPEIPFKIVLLDEADNMTSDAQQALRRLMELYSSVTRFILIANYPSKIIDPIQSRCAFFRFQPLSKQDVIERLRYIAENEGVDYEEEALDAIYEISEGDMRKAINVLQAASYLGKVTVDAVYRVVGMAKPREVREMLATALKGDFTAARSLLRKIMIEYGMSGEDVARQIHRELFSTELKMPEELRVLAADYLGEVHYRLVEGSDDDIQLSAFLAWLTMMSRKLEV</sequence>
<keyword id="KW-0067">ATP-binding</keyword>
<keyword id="KW-0235">DNA replication</keyword>
<keyword id="KW-0547">Nucleotide-binding</keyword>
<keyword id="KW-1185">Reference proteome</keyword>
<dbReference type="EMBL" id="BA000002">
    <property type="protein sequence ID" value="BAA80521.2"/>
    <property type="molecule type" value="Genomic_DNA"/>
</dbReference>
<dbReference type="PIR" id="C72633">
    <property type="entry name" value="C72633"/>
</dbReference>
<dbReference type="SMR" id="Q9YBS7"/>
<dbReference type="STRING" id="272557.APE_1522.1"/>
<dbReference type="EnsemblBacteria" id="BAA80521">
    <property type="protein sequence ID" value="BAA80521"/>
    <property type="gene ID" value="APE_1522.1"/>
</dbReference>
<dbReference type="KEGG" id="ape:APE_1522.1"/>
<dbReference type="PATRIC" id="fig|272557.25.peg.1026"/>
<dbReference type="eggNOG" id="arCOG00469">
    <property type="taxonomic scope" value="Archaea"/>
</dbReference>
<dbReference type="Proteomes" id="UP000002518">
    <property type="component" value="Chromosome"/>
</dbReference>
<dbReference type="GO" id="GO:0005663">
    <property type="term" value="C:DNA replication factor C complex"/>
    <property type="evidence" value="ECO:0007669"/>
    <property type="project" value="InterPro"/>
</dbReference>
<dbReference type="GO" id="GO:0005524">
    <property type="term" value="F:ATP binding"/>
    <property type="evidence" value="ECO:0007669"/>
    <property type="project" value="UniProtKB-UniRule"/>
</dbReference>
<dbReference type="GO" id="GO:0016887">
    <property type="term" value="F:ATP hydrolysis activity"/>
    <property type="evidence" value="ECO:0007669"/>
    <property type="project" value="InterPro"/>
</dbReference>
<dbReference type="GO" id="GO:0003677">
    <property type="term" value="F:DNA binding"/>
    <property type="evidence" value="ECO:0007669"/>
    <property type="project" value="InterPro"/>
</dbReference>
<dbReference type="GO" id="GO:0003689">
    <property type="term" value="F:DNA clamp loader activity"/>
    <property type="evidence" value="ECO:0007669"/>
    <property type="project" value="UniProtKB-UniRule"/>
</dbReference>
<dbReference type="GO" id="GO:0006281">
    <property type="term" value="P:DNA repair"/>
    <property type="evidence" value="ECO:0007669"/>
    <property type="project" value="TreeGrafter"/>
</dbReference>
<dbReference type="GO" id="GO:0006261">
    <property type="term" value="P:DNA-templated DNA replication"/>
    <property type="evidence" value="ECO:0007669"/>
    <property type="project" value="TreeGrafter"/>
</dbReference>
<dbReference type="CDD" id="cd00009">
    <property type="entry name" value="AAA"/>
    <property type="match status" value="1"/>
</dbReference>
<dbReference type="CDD" id="cd18140">
    <property type="entry name" value="HLD_clamp_RFC"/>
    <property type="match status" value="1"/>
</dbReference>
<dbReference type="FunFam" id="1.20.272.10:FF:000029">
    <property type="entry name" value="Replication factor C small subunit"/>
    <property type="match status" value="1"/>
</dbReference>
<dbReference type="FunFam" id="1.10.8.60:FF:000012">
    <property type="entry name" value="Replication factor C subunit 4"/>
    <property type="match status" value="1"/>
</dbReference>
<dbReference type="FunFam" id="3.40.50.300:FF:000129">
    <property type="entry name" value="Replication factor C subunit 5"/>
    <property type="match status" value="1"/>
</dbReference>
<dbReference type="Gene3D" id="1.10.8.60">
    <property type="match status" value="1"/>
</dbReference>
<dbReference type="Gene3D" id="1.20.272.10">
    <property type="match status" value="1"/>
</dbReference>
<dbReference type="Gene3D" id="3.40.50.300">
    <property type="entry name" value="P-loop containing nucleotide triphosphate hydrolases"/>
    <property type="match status" value="1"/>
</dbReference>
<dbReference type="HAMAP" id="MF_01509">
    <property type="entry name" value="RfcS"/>
    <property type="match status" value="1"/>
</dbReference>
<dbReference type="InterPro" id="IPR003593">
    <property type="entry name" value="AAA+_ATPase"/>
</dbReference>
<dbReference type="InterPro" id="IPR003959">
    <property type="entry name" value="ATPase_AAA_core"/>
</dbReference>
<dbReference type="InterPro" id="IPR008921">
    <property type="entry name" value="DNA_pol3_clamp-load_cplx_C"/>
</dbReference>
<dbReference type="InterPro" id="IPR050238">
    <property type="entry name" value="DNA_Rep/Repair_Clamp_Loader"/>
</dbReference>
<dbReference type="InterPro" id="IPR027417">
    <property type="entry name" value="P-loop_NTPase"/>
</dbReference>
<dbReference type="InterPro" id="IPR023748">
    <property type="entry name" value="Rep_factor-C_ssu_arc"/>
</dbReference>
<dbReference type="InterPro" id="IPR013748">
    <property type="entry name" value="Rep_factorC_C"/>
</dbReference>
<dbReference type="InterPro" id="IPR047854">
    <property type="entry name" value="RFC_lid"/>
</dbReference>
<dbReference type="NCBIfam" id="NF001679">
    <property type="entry name" value="PRK00440.1"/>
    <property type="match status" value="1"/>
</dbReference>
<dbReference type="PANTHER" id="PTHR11669">
    <property type="entry name" value="REPLICATION FACTOR C / DNA POLYMERASE III GAMMA-TAU SUBUNIT"/>
    <property type="match status" value="1"/>
</dbReference>
<dbReference type="PANTHER" id="PTHR11669:SF20">
    <property type="entry name" value="REPLICATION FACTOR C SUBUNIT 4"/>
    <property type="match status" value="1"/>
</dbReference>
<dbReference type="Pfam" id="PF00004">
    <property type="entry name" value="AAA"/>
    <property type="match status" value="1"/>
</dbReference>
<dbReference type="Pfam" id="PF21960">
    <property type="entry name" value="RCF1-5-like_lid"/>
    <property type="match status" value="1"/>
</dbReference>
<dbReference type="Pfam" id="PF08542">
    <property type="entry name" value="Rep_fac_C"/>
    <property type="match status" value="1"/>
</dbReference>
<dbReference type="SMART" id="SM00382">
    <property type="entry name" value="AAA"/>
    <property type="match status" value="1"/>
</dbReference>
<dbReference type="SUPFAM" id="SSF52540">
    <property type="entry name" value="P-loop containing nucleoside triphosphate hydrolases"/>
    <property type="match status" value="1"/>
</dbReference>
<dbReference type="SUPFAM" id="SSF48019">
    <property type="entry name" value="post-AAA+ oligomerization domain-like"/>
    <property type="match status" value="1"/>
</dbReference>
<organism>
    <name type="scientific">Aeropyrum pernix (strain ATCC 700893 / DSM 11879 / JCM 9820 / NBRC 100138 / K1)</name>
    <dbReference type="NCBI Taxonomy" id="272557"/>
    <lineage>
        <taxon>Archaea</taxon>
        <taxon>Thermoproteota</taxon>
        <taxon>Thermoprotei</taxon>
        <taxon>Desulfurococcales</taxon>
        <taxon>Desulfurococcaceae</taxon>
        <taxon>Aeropyrum</taxon>
    </lineage>
</organism>
<gene>
    <name evidence="1" type="primary">rfcS</name>
    <name type="ordered locus">APE_1522.1</name>
</gene>
<evidence type="ECO:0000255" key="1">
    <source>
        <dbReference type="HAMAP-Rule" id="MF_01509"/>
    </source>
</evidence>
<reference key="1">
    <citation type="journal article" date="1999" name="DNA Res.">
        <title>Complete genome sequence of an aerobic hyper-thermophilic crenarchaeon, Aeropyrum pernix K1.</title>
        <authorList>
            <person name="Kawarabayasi Y."/>
            <person name="Hino Y."/>
            <person name="Horikawa H."/>
            <person name="Yamazaki S."/>
            <person name="Haikawa Y."/>
            <person name="Jin-no K."/>
            <person name="Takahashi M."/>
            <person name="Sekine M."/>
            <person name="Baba S."/>
            <person name="Ankai A."/>
            <person name="Kosugi H."/>
            <person name="Hosoyama A."/>
            <person name="Fukui S."/>
            <person name="Nagai Y."/>
            <person name="Nishijima K."/>
            <person name="Nakazawa H."/>
            <person name="Takamiya M."/>
            <person name="Masuda S."/>
            <person name="Funahashi T."/>
            <person name="Tanaka T."/>
            <person name="Kudoh Y."/>
            <person name="Yamazaki J."/>
            <person name="Kushida N."/>
            <person name="Oguchi A."/>
            <person name="Aoki K."/>
            <person name="Kubota K."/>
            <person name="Nakamura Y."/>
            <person name="Nomura N."/>
            <person name="Sako Y."/>
            <person name="Kikuchi H."/>
        </authorList>
    </citation>
    <scope>NUCLEOTIDE SEQUENCE [LARGE SCALE GENOMIC DNA]</scope>
    <source>
        <strain>ATCC 700893 / DSM 11879 / JCM 9820 / NBRC 100138 / K1</strain>
    </source>
</reference>